<proteinExistence type="inferred from homology"/>
<reference key="1">
    <citation type="journal article" date="2009" name="Science">
        <title>The dynamics and time scale of ongoing genomic erosion in symbiotic bacteria.</title>
        <authorList>
            <person name="Moran N.A."/>
            <person name="McLaughlin H.J."/>
            <person name="Sorek R."/>
        </authorList>
    </citation>
    <scope>NUCLEOTIDE SEQUENCE [LARGE SCALE GENOMIC DNA]</scope>
    <source>
        <strain>5A</strain>
    </source>
</reference>
<keyword id="KW-0028">Amino-acid biosynthesis</keyword>
<keyword id="KW-0057">Aromatic amino acid biosynthesis</keyword>
<keyword id="KW-0274">FAD</keyword>
<keyword id="KW-0285">Flavoprotein</keyword>
<keyword id="KW-0288">FMN</keyword>
<keyword id="KW-0456">Lyase</keyword>
<keyword id="KW-0521">NADP</keyword>
<organism>
    <name type="scientific">Buchnera aphidicola subsp. Acyrthosiphon pisum (strain 5A)</name>
    <dbReference type="NCBI Taxonomy" id="563178"/>
    <lineage>
        <taxon>Bacteria</taxon>
        <taxon>Pseudomonadati</taxon>
        <taxon>Pseudomonadota</taxon>
        <taxon>Gammaproteobacteria</taxon>
        <taxon>Enterobacterales</taxon>
        <taxon>Erwiniaceae</taxon>
        <taxon>Buchnera</taxon>
    </lineage>
</organism>
<name>AROC_BUCA5</name>
<sequence>MSGNTIGKIFCVTTFGESHGEALGCIIDGTPPGLELSCKDLQYDLNRRRPGTSRYTTLRREPDEVNILSGIFNGVTTGTSIGLIIYNHDHRSQDYSDIKNLFRPGHADYTYEKKYGIRDYRGGGRSSARETAMRVAAGAIAKKYLNEKYGITIRAYLSAMGNIKCPFKSWQEVENNPFFCSDPEKILALENLIKYLKKIGDSIGAEITIIAENIPVGLGEPVFDRLDADLSHALMSINAAKGVEIGDGFSVINQRGSEHRDEITPQGFLTNHSGGILGGISNGREIVLKVAFKPTSSIRKAGNTINKNNEKVQIVTKGRHDPCVGLRAVPITEAMVAIVLMDHLLRFRAQCSGK</sequence>
<comment type="function">
    <text evidence="1">Catalyzes the anti-1,4-elimination of the C-3 phosphate and the C-6 proR hydrogen from 5-enolpyruvylshikimate-3-phosphate (EPSP) to yield chorismate, which is the branch point compound that serves as the starting substrate for the three terminal pathways of aromatic amino acid biosynthesis. This reaction introduces a second double bond into the aromatic ring system.</text>
</comment>
<comment type="catalytic activity">
    <reaction evidence="1">
        <text>5-O-(1-carboxyvinyl)-3-phosphoshikimate = chorismate + phosphate</text>
        <dbReference type="Rhea" id="RHEA:21020"/>
        <dbReference type="ChEBI" id="CHEBI:29748"/>
        <dbReference type="ChEBI" id="CHEBI:43474"/>
        <dbReference type="ChEBI" id="CHEBI:57701"/>
        <dbReference type="EC" id="4.2.3.5"/>
    </reaction>
</comment>
<comment type="cofactor">
    <cofactor evidence="1">
        <name>FMNH2</name>
        <dbReference type="ChEBI" id="CHEBI:57618"/>
    </cofactor>
    <text evidence="1">Reduced FMN (FMNH(2)).</text>
</comment>
<comment type="pathway">
    <text evidence="1">Metabolic intermediate biosynthesis; chorismate biosynthesis; chorismate from D-erythrose 4-phosphate and phosphoenolpyruvate: step 7/7.</text>
</comment>
<comment type="subunit">
    <text evidence="1">Homotetramer.</text>
</comment>
<comment type="similarity">
    <text evidence="1">Belongs to the chorismate synthase family.</text>
</comment>
<gene>
    <name evidence="1" type="primary">aroC</name>
    <name type="ordered locus">BUAP5A_095</name>
</gene>
<feature type="chain" id="PRO_1000132758" description="Chorismate synthase">
    <location>
        <begin position="1"/>
        <end position="354"/>
    </location>
</feature>
<feature type="binding site" evidence="1">
    <location>
        <position position="48"/>
    </location>
    <ligand>
        <name>NADP(+)</name>
        <dbReference type="ChEBI" id="CHEBI:58349"/>
    </ligand>
</feature>
<feature type="binding site" evidence="1">
    <location>
        <position position="54"/>
    </location>
    <ligand>
        <name>NADP(+)</name>
        <dbReference type="ChEBI" id="CHEBI:58349"/>
    </ligand>
</feature>
<feature type="binding site" evidence="1">
    <location>
        <begin position="125"/>
        <end position="127"/>
    </location>
    <ligand>
        <name>FMN</name>
        <dbReference type="ChEBI" id="CHEBI:58210"/>
    </ligand>
</feature>
<feature type="binding site" evidence="1">
    <location>
        <begin position="238"/>
        <end position="239"/>
    </location>
    <ligand>
        <name>FMN</name>
        <dbReference type="ChEBI" id="CHEBI:58210"/>
    </ligand>
</feature>
<feature type="binding site" evidence="1">
    <location>
        <position position="278"/>
    </location>
    <ligand>
        <name>FMN</name>
        <dbReference type="ChEBI" id="CHEBI:58210"/>
    </ligand>
</feature>
<feature type="binding site" evidence="1">
    <location>
        <begin position="293"/>
        <end position="297"/>
    </location>
    <ligand>
        <name>FMN</name>
        <dbReference type="ChEBI" id="CHEBI:58210"/>
    </ligand>
</feature>
<feature type="binding site" evidence="1">
    <location>
        <position position="319"/>
    </location>
    <ligand>
        <name>FMN</name>
        <dbReference type="ChEBI" id="CHEBI:58210"/>
    </ligand>
</feature>
<protein>
    <recommendedName>
        <fullName evidence="1">Chorismate synthase</fullName>
        <shortName evidence="1">CS</shortName>
        <ecNumber evidence="1">4.2.3.5</ecNumber>
    </recommendedName>
    <alternativeName>
        <fullName evidence="1">5-enolpyruvylshikimate-3-phosphate phospholyase</fullName>
    </alternativeName>
</protein>
<evidence type="ECO:0000255" key="1">
    <source>
        <dbReference type="HAMAP-Rule" id="MF_00300"/>
    </source>
</evidence>
<dbReference type="EC" id="4.2.3.5" evidence="1"/>
<dbReference type="EMBL" id="CP001161">
    <property type="protein sequence ID" value="ACL30471.1"/>
    <property type="molecule type" value="Genomic_DNA"/>
</dbReference>
<dbReference type="RefSeq" id="WP_009874051.1">
    <property type="nucleotide sequence ID" value="NC_011833.1"/>
</dbReference>
<dbReference type="SMR" id="B8D8P9"/>
<dbReference type="KEGG" id="bap:BUAP5A_095"/>
<dbReference type="HOGENOM" id="CLU_034547_0_2_6"/>
<dbReference type="OrthoDB" id="9771806at2"/>
<dbReference type="UniPathway" id="UPA00053">
    <property type="reaction ID" value="UER00090"/>
</dbReference>
<dbReference type="Proteomes" id="UP000006904">
    <property type="component" value="Chromosome"/>
</dbReference>
<dbReference type="GO" id="GO:0005829">
    <property type="term" value="C:cytosol"/>
    <property type="evidence" value="ECO:0007669"/>
    <property type="project" value="TreeGrafter"/>
</dbReference>
<dbReference type="GO" id="GO:0004107">
    <property type="term" value="F:chorismate synthase activity"/>
    <property type="evidence" value="ECO:0007669"/>
    <property type="project" value="UniProtKB-UniRule"/>
</dbReference>
<dbReference type="GO" id="GO:0010181">
    <property type="term" value="F:FMN binding"/>
    <property type="evidence" value="ECO:0007669"/>
    <property type="project" value="TreeGrafter"/>
</dbReference>
<dbReference type="GO" id="GO:0008652">
    <property type="term" value="P:amino acid biosynthetic process"/>
    <property type="evidence" value="ECO:0007669"/>
    <property type="project" value="UniProtKB-KW"/>
</dbReference>
<dbReference type="GO" id="GO:0009073">
    <property type="term" value="P:aromatic amino acid family biosynthetic process"/>
    <property type="evidence" value="ECO:0007669"/>
    <property type="project" value="UniProtKB-KW"/>
</dbReference>
<dbReference type="GO" id="GO:0009423">
    <property type="term" value="P:chorismate biosynthetic process"/>
    <property type="evidence" value="ECO:0007669"/>
    <property type="project" value="UniProtKB-UniRule"/>
</dbReference>
<dbReference type="CDD" id="cd07304">
    <property type="entry name" value="Chorismate_synthase"/>
    <property type="match status" value="1"/>
</dbReference>
<dbReference type="FunFam" id="3.60.150.10:FF:000001">
    <property type="entry name" value="Chorismate synthase"/>
    <property type="match status" value="1"/>
</dbReference>
<dbReference type="Gene3D" id="3.60.150.10">
    <property type="entry name" value="Chorismate synthase AroC"/>
    <property type="match status" value="1"/>
</dbReference>
<dbReference type="HAMAP" id="MF_00300">
    <property type="entry name" value="Chorismate_synth"/>
    <property type="match status" value="1"/>
</dbReference>
<dbReference type="InterPro" id="IPR000453">
    <property type="entry name" value="Chorismate_synth"/>
</dbReference>
<dbReference type="InterPro" id="IPR035904">
    <property type="entry name" value="Chorismate_synth_AroC_sf"/>
</dbReference>
<dbReference type="InterPro" id="IPR020541">
    <property type="entry name" value="Chorismate_synthase_CS"/>
</dbReference>
<dbReference type="NCBIfam" id="TIGR00033">
    <property type="entry name" value="aroC"/>
    <property type="match status" value="1"/>
</dbReference>
<dbReference type="NCBIfam" id="NF003793">
    <property type="entry name" value="PRK05382.1"/>
    <property type="match status" value="1"/>
</dbReference>
<dbReference type="PANTHER" id="PTHR21085">
    <property type="entry name" value="CHORISMATE SYNTHASE"/>
    <property type="match status" value="1"/>
</dbReference>
<dbReference type="PANTHER" id="PTHR21085:SF0">
    <property type="entry name" value="CHORISMATE SYNTHASE"/>
    <property type="match status" value="1"/>
</dbReference>
<dbReference type="Pfam" id="PF01264">
    <property type="entry name" value="Chorismate_synt"/>
    <property type="match status" value="1"/>
</dbReference>
<dbReference type="PIRSF" id="PIRSF001456">
    <property type="entry name" value="Chorismate_synth"/>
    <property type="match status" value="1"/>
</dbReference>
<dbReference type="SUPFAM" id="SSF103263">
    <property type="entry name" value="Chorismate synthase, AroC"/>
    <property type="match status" value="1"/>
</dbReference>
<dbReference type="PROSITE" id="PS00787">
    <property type="entry name" value="CHORISMATE_SYNTHASE_1"/>
    <property type="match status" value="1"/>
</dbReference>
<dbReference type="PROSITE" id="PS00788">
    <property type="entry name" value="CHORISMATE_SYNTHASE_2"/>
    <property type="match status" value="1"/>
</dbReference>
<dbReference type="PROSITE" id="PS00789">
    <property type="entry name" value="CHORISMATE_SYNTHASE_3"/>
    <property type="match status" value="1"/>
</dbReference>
<accession>B8D8P9</accession>